<proteinExistence type="inferred from homology"/>
<evidence type="ECO:0000250" key="1"/>
<evidence type="ECO:0000255" key="2"/>
<evidence type="ECO:0000269" key="3">
    <source>
    </source>
</evidence>
<evidence type="ECO:0000305" key="4"/>
<comment type="function">
    <text evidence="1">Involved in the second step of GPI biosynthesis. De-N-acetylation of N-acetylglucosaminyl-phosphatidylinositol (By similarity).</text>
</comment>
<comment type="catalytic activity">
    <reaction>
        <text>a 6-(N-acetyl-alpha-D-glucosaminyl)-1-(1,2-diacyl-sn-glycero-3-phospho)-1D-myo-inositol + H2O = a 6-(alpha-D-glucosaminyl)-1-(1,2-diacyl-sn-glycero-3-phospho)-1D-myo-inositol + acetate</text>
        <dbReference type="Rhea" id="RHEA:11660"/>
        <dbReference type="ChEBI" id="CHEBI:15377"/>
        <dbReference type="ChEBI" id="CHEBI:30089"/>
        <dbReference type="ChEBI" id="CHEBI:57265"/>
        <dbReference type="ChEBI" id="CHEBI:57997"/>
        <dbReference type="EC" id="3.5.1.89"/>
    </reaction>
</comment>
<comment type="pathway">
    <text>Glycolipid biosynthesis; glycosylphosphatidylinositol-anchor biosynthesis.</text>
</comment>
<comment type="subcellular location">
    <subcellularLocation>
        <location evidence="3">Endoplasmic reticulum membrane</location>
        <topology evidence="3">Single-pass membrane protein</topology>
    </subcellularLocation>
</comment>
<comment type="similarity">
    <text evidence="4">Belongs to the PIGL family.</text>
</comment>
<keyword id="KW-0256">Endoplasmic reticulum</keyword>
<keyword id="KW-0337">GPI-anchor biosynthesis</keyword>
<keyword id="KW-0378">Hydrolase</keyword>
<keyword id="KW-0472">Membrane</keyword>
<keyword id="KW-1185">Reference proteome</keyword>
<keyword id="KW-0812">Transmembrane</keyword>
<keyword id="KW-1133">Transmembrane helix</keyword>
<gene>
    <name type="primary">gpi12</name>
    <name type="ORF">SPAPB2B4.01c</name>
</gene>
<organism>
    <name type="scientific">Schizosaccharomyces pombe (strain 972 / ATCC 24843)</name>
    <name type="common">Fission yeast</name>
    <dbReference type="NCBI Taxonomy" id="284812"/>
    <lineage>
        <taxon>Eukaryota</taxon>
        <taxon>Fungi</taxon>
        <taxon>Dikarya</taxon>
        <taxon>Ascomycota</taxon>
        <taxon>Taphrinomycotina</taxon>
        <taxon>Schizosaccharomycetes</taxon>
        <taxon>Schizosaccharomycetales</taxon>
        <taxon>Schizosaccharomycetaceae</taxon>
        <taxon>Schizosaccharomyces</taxon>
    </lineage>
</organism>
<name>GPI12_SCHPO</name>
<sequence>MIWFWSTLLVTAIAVLSTANESSSGQEKLAVESILFVFAHPDDESMFFGPTIDYLGNQHSTRVHVLCLSNGNADGLGSVREKELVVAASKYQIDKTNVHVVSDPQLQDGMQAKWDPTDVAKHISQIIERYNIKTLITFDNKGISGHPNHIACYEGAMKIVKATPQVQVFVLESVNIFRKYISYLDTIPTLVQSQAGRNDTIIIHADRKSTQRIRDAMVRGHKSQMVWFRYGWIYLSKYMSNNVLKRAT</sequence>
<accession>Q9HDW9</accession>
<dbReference type="EC" id="3.5.1.89"/>
<dbReference type="EMBL" id="CU329670">
    <property type="protein sequence ID" value="CAC21467.1"/>
    <property type="molecule type" value="Genomic_DNA"/>
</dbReference>
<dbReference type="RefSeq" id="NP_593887.1">
    <property type="nucleotide sequence ID" value="NM_001019317.2"/>
</dbReference>
<dbReference type="SMR" id="Q9HDW9"/>
<dbReference type="FunCoup" id="Q9HDW9">
    <property type="interactions" value="307"/>
</dbReference>
<dbReference type="STRING" id="284812.Q9HDW9"/>
<dbReference type="iPTMnet" id="Q9HDW9"/>
<dbReference type="SwissPalm" id="Q9HDW9"/>
<dbReference type="PaxDb" id="4896-SPAPB2B4.01c.1"/>
<dbReference type="EnsemblFungi" id="SPAPB2B4.01c.1">
    <property type="protein sequence ID" value="SPAPB2B4.01c.1:pep"/>
    <property type="gene ID" value="SPAPB2B4.01c"/>
</dbReference>
<dbReference type="GeneID" id="2543490"/>
<dbReference type="KEGG" id="spo:2543490"/>
<dbReference type="PomBase" id="SPAPB2B4.01c">
    <property type="gene designation" value="gpi12"/>
</dbReference>
<dbReference type="VEuPathDB" id="FungiDB:SPAPB2B4.01c"/>
<dbReference type="eggNOG" id="KOG3332">
    <property type="taxonomic scope" value="Eukaryota"/>
</dbReference>
<dbReference type="HOGENOM" id="CLU_034979_0_1_1"/>
<dbReference type="InParanoid" id="Q9HDW9"/>
<dbReference type="OMA" id="YVLESVN"/>
<dbReference type="PhylomeDB" id="Q9HDW9"/>
<dbReference type="Reactome" id="R-SPO-162710">
    <property type="pathway name" value="Synthesis of glycosylphosphatidylinositol (GPI)"/>
</dbReference>
<dbReference type="UniPathway" id="UPA00196"/>
<dbReference type="PRO" id="PR:Q9HDW9"/>
<dbReference type="Proteomes" id="UP000002485">
    <property type="component" value="Chromosome I"/>
</dbReference>
<dbReference type="GO" id="GO:0005783">
    <property type="term" value="C:endoplasmic reticulum"/>
    <property type="evidence" value="ECO:0007005"/>
    <property type="project" value="PomBase"/>
</dbReference>
<dbReference type="GO" id="GO:0005789">
    <property type="term" value="C:endoplasmic reticulum membrane"/>
    <property type="evidence" value="ECO:0000266"/>
    <property type="project" value="PomBase"/>
</dbReference>
<dbReference type="GO" id="GO:0000225">
    <property type="term" value="F:N-acetylglucosaminylphosphatidylinositol deacetylase activity"/>
    <property type="evidence" value="ECO:0000318"/>
    <property type="project" value="GO_Central"/>
</dbReference>
<dbReference type="GO" id="GO:0006506">
    <property type="term" value="P:GPI anchor biosynthetic process"/>
    <property type="evidence" value="ECO:0000266"/>
    <property type="project" value="PomBase"/>
</dbReference>
<dbReference type="FunFam" id="3.40.50.10320:FF:000002">
    <property type="entry name" value="Probable N-acetylglucosaminyl-phosphatidylinositol de-N-acetylase"/>
    <property type="match status" value="1"/>
</dbReference>
<dbReference type="Gene3D" id="3.40.50.10320">
    <property type="entry name" value="LmbE-like"/>
    <property type="match status" value="1"/>
</dbReference>
<dbReference type="InterPro" id="IPR003737">
    <property type="entry name" value="GlcNAc_PI_deacetylase-related"/>
</dbReference>
<dbReference type="InterPro" id="IPR024078">
    <property type="entry name" value="LmbE-like_dom_sf"/>
</dbReference>
<dbReference type="PANTHER" id="PTHR12993:SF11">
    <property type="entry name" value="N-ACETYLGLUCOSAMINYL-PHOSPHATIDYLINOSITOL DE-N-ACETYLASE"/>
    <property type="match status" value="1"/>
</dbReference>
<dbReference type="PANTHER" id="PTHR12993">
    <property type="entry name" value="N-ACETYLGLUCOSAMINYL-PHOSPHATIDYLINOSITOL DE-N-ACETYLASE-RELATED"/>
    <property type="match status" value="1"/>
</dbReference>
<dbReference type="Pfam" id="PF02585">
    <property type="entry name" value="PIG-L"/>
    <property type="match status" value="1"/>
</dbReference>
<dbReference type="SUPFAM" id="SSF102588">
    <property type="entry name" value="LmbE-like"/>
    <property type="match status" value="1"/>
</dbReference>
<feature type="chain" id="PRO_0000207169" description="Probable N-acetylglucosaminyl-phosphatidylinositol de-N-acetylase">
    <location>
        <begin position="1"/>
        <end position="248"/>
    </location>
</feature>
<feature type="topological domain" description="Lumenal" evidence="2">
    <location>
        <begin position="1"/>
        <end position="7"/>
    </location>
</feature>
<feature type="transmembrane region" description="Helical" evidence="2">
    <location>
        <begin position="8"/>
        <end position="24"/>
    </location>
</feature>
<feature type="topological domain" description="Cytoplasmic" evidence="2">
    <location>
        <begin position="25"/>
        <end position="248"/>
    </location>
</feature>
<reference key="1">
    <citation type="journal article" date="2002" name="Nature">
        <title>The genome sequence of Schizosaccharomyces pombe.</title>
        <authorList>
            <person name="Wood V."/>
            <person name="Gwilliam R."/>
            <person name="Rajandream M.A."/>
            <person name="Lyne M.H."/>
            <person name="Lyne R."/>
            <person name="Stewart A."/>
            <person name="Sgouros J.G."/>
            <person name="Peat N."/>
            <person name="Hayles J."/>
            <person name="Baker S.G."/>
            <person name="Basham D."/>
            <person name="Bowman S."/>
            <person name="Brooks K."/>
            <person name="Brown D."/>
            <person name="Brown S."/>
            <person name="Chillingworth T."/>
            <person name="Churcher C.M."/>
            <person name="Collins M."/>
            <person name="Connor R."/>
            <person name="Cronin A."/>
            <person name="Davis P."/>
            <person name="Feltwell T."/>
            <person name="Fraser A."/>
            <person name="Gentles S."/>
            <person name="Goble A."/>
            <person name="Hamlin N."/>
            <person name="Harris D.E."/>
            <person name="Hidalgo J."/>
            <person name="Hodgson G."/>
            <person name="Holroyd S."/>
            <person name="Hornsby T."/>
            <person name="Howarth S."/>
            <person name="Huckle E.J."/>
            <person name="Hunt S."/>
            <person name="Jagels K."/>
            <person name="James K.D."/>
            <person name="Jones L."/>
            <person name="Jones M."/>
            <person name="Leather S."/>
            <person name="McDonald S."/>
            <person name="McLean J."/>
            <person name="Mooney P."/>
            <person name="Moule S."/>
            <person name="Mungall K.L."/>
            <person name="Murphy L.D."/>
            <person name="Niblett D."/>
            <person name="Odell C."/>
            <person name="Oliver K."/>
            <person name="O'Neil S."/>
            <person name="Pearson D."/>
            <person name="Quail M.A."/>
            <person name="Rabbinowitsch E."/>
            <person name="Rutherford K.M."/>
            <person name="Rutter S."/>
            <person name="Saunders D."/>
            <person name="Seeger K."/>
            <person name="Sharp S."/>
            <person name="Skelton J."/>
            <person name="Simmonds M.N."/>
            <person name="Squares R."/>
            <person name="Squares S."/>
            <person name="Stevens K."/>
            <person name="Taylor K."/>
            <person name="Taylor R.G."/>
            <person name="Tivey A."/>
            <person name="Walsh S.V."/>
            <person name="Warren T."/>
            <person name="Whitehead S."/>
            <person name="Woodward J.R."/>
            <person name="Volckaert G."/>
            <person name="Aert R."/>
            <person name="Robben J."/>
            <person name="Grymonprez B."/>
            <person name="Weltjens I."/>
            <person name="Vanstreels E."/>
            <person name="Rieger M."/>
            <person name="Schaefer M."/>
            <person name="Mueller-Auer S."/>
            <person name="Gabel C."/>
            <person name="Fuchs M."/>
            <person name="Duesterhoeft A."/>
            <person name="Fritzc C."/>
            <person name="Holzer E."/>
            <person name="Moestl D."/>
            <person name="Hilbert H."/>
            <person name="Borzym K."/>
            <person name="Langer I."/>
            <person name="Beck A."/>
            <person name="Lehrach H."/>
            <person name="Reinhardt R."/>
            <person name="Pohl T.M."/>
            <person name="Eger P."/>
            <person name="Zimmermann W."/>
            <person name="Wedler H."/>
            <person name="Wambutt R."/>
            <person name="Purnelle B."/>
            <person name="Goffeau A."/>
            <person name="Cadieu E."/>
            <person name="Dreano S."/>
            <person name="Gloux S."/>
            <person name="Lelaure V."/>
            <person name="Mottier S."/>
            <person name="Galibert F."/>
            <person name="Aves S.J."/>
            <person name="Xiang Z."/>
            <person name="Hunt C."/>
            <person name="Moore K."/>
            <person name="Hurst S.M."/>
            <person name="Lucas M."/>
            <person name="Rochet M."/>
            <person name="Gaillardin C."/>
            <person name="Tallada V.A."/>
            <person name="Garzon A."/>
            <person name="Thode G."/>
            <person name="Daga R.R."/>
            <person name="Cruzado L."/>
            <person name="Jimenez J."/>
            <person name="Sanchez M."/>
            <person name="del Rey F."/>
            <person name="Benito J."/>
            <person name="Dominguez A."/>
            <person name="Revuelta J.L."/>
            <person name="Moreno S."/>
            <person name="Armstrong J."/>
            <person name="Forsburg S.L."/>
            <person name="Cerutti L."/>
            <person name="Lowe T."/>
            <person name="McCombie W.R."/>
            <person name="Paulsen I."/>
            <person name="Potashkin J."/>
            <person name="Shpakovski G.V."/>
            <person name="Ussery D."/>
            <person name="Barrell B.G."/>
            <person name="Nurse P."/>
        </authorList>
    </citation>
    <scope>NUCLEOTIDE SEQUENCE [LARGE SCALE GENOMIC DNA]</scope>
    <source>
        <strain>972 / ATCC 24843</strain>
    </source>
</reference>
<reference key="2">
    <citation type="journal article" date="2006" name="Nat. Biotechnol.">
        <title>ORFeome cloning and global analysis of protein localization in the fission yeast Schizosaccharomyces pombe.</title>
        <authorList>
            <person name="Matsuyama A."/>
            <person name="Arai R."/>
            <person name="Yashiroda Y."/>
            <person name="Shirai A."/>
            <person name="Kamata A."/>
            <person name="Sekido S."/>
            <person name="Kobayashi Y."/>
            <person name="Hashimoto A."/>
            <person name="Hamamoto M."/>
            <person name="Hiraoka Y."/>
            <person name="Horinouchi S."/>
            <person name="Yoshida M."/>
        </authorList>
    </citation>
    <scope>SUBCELLULAR LOCATION [LARGE SCALE ANALYSIS]</scope>
</reference>
<protein>
    <recommendedName>
        <fullName>Probable N-acetylglucosaminyl-phosphatidylinositol de-N-acetylase</fullName>
        <ecNumber>3.5.1.89</ecNumber>
    </recommendedName>
</protein>